<feature type="chain" id="PRO_1000058371" description="6,7-dimethyl-8-ribityllumazine synthase">
    <location>
        <begin position="1"/>
        <end position="158"/>
    </location>
</feature>
<feature type="active site" description="Proton donor" evidence="1">
    <location>
        <position position="93"/>
    </location>
</feature>
<feature type="binding site" evidence="1">
    <location>
        <position position="23"/>
    </location>
    <ligand>
        <name>5-amino-6-(D-ribitylamino)uracil</name>
        <dbReference type="ChEBI" id="CHEBI:15934"/>
    </ligand>
</feature>
<feature type="binding site" evidence="1">
    <location>
        <begin position="61"/>
        <end position="63"/>
    </location>
    <ligand>
        <name>5-amino-6-(D-ribitylamino)uracil</name>
        <dbReference type="ChEBI" id="CHEBI:15934"/>
    </ligand>
</feature>
<feature type="binding site" evidence="1">
    <location>
        <begin position="85"/>
        <end position="87"/>
    </location>
    <ligand>
        <name>5-amino-6-(D-ribitylamino)uracil</name>
        <dbReference type="ChEBI" id="CHEBI:15934"/>
    </ligand>
</feature>
<feature type="binding site" evidence="1">
    <location>
        <begin position="90"/>
        <end position="91"/>
    </location>
    <ligand>
        <name>(2S)-2-hydroxy-3-oxobutyl phosphate</name>
        <dbReference type="ChEBI" id="CHEBI:58830"/>
    </ligand>
</feature>
<feature type="binding site" evidence="1">
    <location>
        <position position="118"/>
    </location>
    <ligand>
        <name>5-amino-6-(D-ribitylamino)uracil</name>
        <dbReference type="ChEBI" id="CHEBI:15934"/>
    </ligand>
</feature>
<feature type="binding site" evidence="1">
    <location>
        <position position="132"/>
    </location>
    <ligand>
        <name>(2S)-2-hydroxy-3-oxobutyl phosphate</name>
        <dbReference type="ChEBI" id="CHEBI:58830"/>
    </ligand>
</feature>
<proteinExistence type="inferred from homology"/>
<gene>
    <name evidence="1" type="primary">ribH</name>
    <name type="ordered locus">P9215_19161</name>
</gene>
<sequence>MTIFEGSFTNASTLKVGIVIARFNDLITNKILSGCLDCLKKHGLDTSELSNQVDIVWVPGSFELPIAAKTLMKKKSYDVVIALGAVIRGETSHYDVVISEASKGISQVSNENNVPIIFGVLTTDTLQQALERAGIKNNLGWNYALQAIEMGSLIKNLN</sequence>
<evidence type="ECO:0000255" key="1">
    <source>
        <dbReference type="HAMAP-Rule" id="MF_00178"/>
    </source>
</evidence>
<dbReference type="EC" id="2.5.1.78" evidence="1"/>
<dbReference type="EMBL" id="CP000825">
    <property type="protein sequence ID" value="ABV51529.1"/>
    <property type="molecule type" value="Genomic_DNA"/>
</dbReference>
<dbReference type="RefSeq" id="WP_012008520.1">
    <property type="nucleotide sequence ID" value="NC_009840.1"/>
</dbReference>
<dbReference type="SMR" id="A8G7E8"/>
<dbReference type="STRING" id="93060.P9215_19161"/>
<dbReference type="KEGG" id="pmh:P9215_19161"/>
<dbReference type="eggNOG" id="COG0054">
    <property type="taxonomic scope" value="Bacteria"/>
</dbReference>
<dbReference type="HOGENOM" id="CLU_089358_1_0_3"/>
<dbReference type="OrthoDB" id="9809709at2"/>
<dbReference type="UniPathway" id="UPA00275">
    <property type="reaction ID" value="UER00404"/>
</dbReference>
<dbReference type="Proteomes" id="UP000002014">
    <property type="component" value="Chromosome"/>
</dbReference>
<dbReference type="GO" id="GO:0005829">
    <property type="term" value="C:cytosol"/>
    <property type="evidence" value="ECO:0007669"/>
    <property type="project" value="TreeGrafter"/>
</dbReference>
<dbReference type="GO" id="GO:0009349">
    <property type="term" value="C:riboflavin synthase complex"/>
    <property type="evidence" value="ECO:0007669"/>
    <property type="project" value="InterPro"/>
</dbReference>
<dbReference type="GO" id="GO:0000906">
    <property type="term" value="F:6,7-dimethyl-8-ribityllumazine synthase activity"/>
    <property type="evidence" value="ECO:0007669"/>
    <property type="project" value="UniProtKB-UniRule"/>
</dbReference>
<dbReference type="GO" id="GO:0009231">
    <property type="term" value="P:riboflavin biosynthetic process"/>
    <property type="evidence" value="ECO:0007669"/>
    <property type="project" value="UniProtKB-UniRule"/>
</dbReference>
<dbReference type="CDD" id="cd09209">
    <property type="entry name" value="Lumazine_synthase-I"/>
    <property type="match status" value="1"/>
</dbReference>
<dbReference type="Gene3D" id="3.40.50.960">
    <property type="entry name" value="Lumazine/riboflavin synthase"/>
    <property type="match status" value="1"/>
</dbReference>
<dbReference type="HAMAP" id="MF_00178">
    <property type="entry name" value="Lumazine_synth"/>
    <property type="match status" value="1"/>
</dbReference>
<dbReference type="InterPro" id="IPR034964">
    <property type="entry name" value="LS"/>
</dbReference>
<dbReference type="InterPro" id="IPR002180">
    <property type="entry name" value="LS/RS"/>
</dbReference>
<dbReference type="InterPro" id="IPR036467">
    <property type="entry name" value="LS/RS_sf"/>
</dbReference>
<dbReference type="NCBIfam" id="TIGR00114">
    <property type="entry name" value="lumazine-synth"/>
    <property type="match status" value="1"/>
</dbReference>
<dbReference type="PANTHER" id="PTHR21058:SF0">
    <property type="entry name" value="6,7-DIMETHYL-8-RIBITYLLUMAZINE SYNTHASE"/>
    <property type="match status" value="1"/>
</dbReference>
<dbReference type="PANTHER" id="PTHR21058">
    <property type="entry name" value="6,7-DIMETHYL-8-RIBITYLLUMAZINE SYNTHASE DMRL SYNTHASE LUMAZINE SYNTHASE"/>
    <property type="match status" value="1"/>
</dbReference>
<dbReference type="Pfam" id="PF00885">
    <property type="entry name" value="DMRL_synthase"/>
    <property type="match status" value="1"/>
</dbReference>
<dbReference type="SUPFAM" id="SSF52121">
    <property type="entry name" value="Lumazine synthase"/>
    <property type="match status" value="1"/>
</dbReference>
<accession>A8G7E8</accession>
<keyword id="KW-0686">Riboflavin biosynthesis</keyword>
<keyword id="KW-0808">Transferase</keyword>
<name>RISB_PROM2</name>
<comment type="function">
    <text evidence="1">Catalyzes the formation of 6,7-dimethyl-8-ribityllumazine by condensation of 5-amino-6-(D-ribitylamino)uracil with 3,4-dihydroxy-2-butanone 4-phosphate. This is the penultimate step in the biosynthesis of riboflavin.</text>
</comment>
<comment type="catalytic activity">
    <reaction evidence="1">
        <text>(2S)-2-hydroxy-3-oxobutyl phosphate + 5-amino-6-(D-ribitylamino)uracil = 6,7-dimethyl-8-(1-D-ribityl)lumazine + phosphate + 2 H2O + H(+)</text>
        <dbReference type="Rhea" id="RHEA:26152"/>
        <dbReference type="ChEBI" id="CHEBI:15377"/>
        <dbReference type="ChEBI" id="CHEBI:15378"/>
        <dbReference type="ChEBI" id="CHEBI:15934"/>
        <dbReference type="ChEBI" id="CHEBI:43474"/>
        <dbReference type="ChEBI" id="CHEBI:58201"/>
        <dbReference type="ChEBI" id="CHEBI:58830"/>
        <dbReference type="EC" id="2.5.1.78"/>
    </reaction>
</comment>
<comment type="pathway">
    <text evidence="1">Cofactor biosynthesis; riboflavin biosynthesis; riboflavin from 2-hydroxy-3-oxobutyl phosphate and 5-amino-6-(D-ribitylamino)uracil: step 1/2.</text>
</comment>
<comment type="similarity">
    <text evidence="1">Belongs to the DMRL synthase family.</text>
</comment>
<protein>
    <recommendedName>
        <fullName evidence="1">6,7-dimethyl-8-ribityllumazine synthase</fullName>
        <shortName evidence="1">DMRL synthase</shortName>
        <shortName evidence="1">LS</shortName>
        <shortName evidence="1">Lumazine synthase</shortName>
        <ecNumber evidence="1">2.5.1.78</ecNumber>
    </recommendedName>
</protein>
<reference key="1">
    <citation type="journal article" date="2007" name="PLoS Genet.">
        <title>Patterns and implications of gene gain and loss in the evolution of Prochlorococcus.</title>
        <authorList>
            <person name="Kettler G.C."/>
            <person name="Martiny A.C."/>
            <person name="Huang K."/>
            <person name="Zucker J."/>
            <person name="Coleman M.L."/>
            <person name="Rodrigue S."/>
            <person name="Chen F."/>
            <person name="Lapidus A."/>
            <person name="Ferriera S."/>
            <person name="Johnson J."/>
            <person name="Steglich C."/>
            <person name="Church G.M."/>
            <person name="Richardson P."/>
            <person name="Chisholm S.W."/>
        </authorList>
    </citation>
    <scope>NUCLEOTIDE SEQUENCE [LARGE SCALE GENOMIC DNA]</scope>
    <source>
        <strain>MIT 9215</strain>
    </source>
</reference>
<organism>
    <name type="scientific">Prochlorococcus marinus (strain MIT 9215)</name>
    <dbReference type="NCBI Taxonomy" id="93060"/>
    <lineage>
        <taxon>Bacteria</taxon>
        <taxon>Bacillati</taxon>
        <taxon>Cyanobacteriota</taxon>
        <taxon>Cyanophyceae</taxon>
        <taxon>Synechococcales</taxon>
        <taxon>Prochlorococcaceae</taxon>
        <taxon>Prochlorococcus</taxon>
    </lineage>
</organism>